<reference key="1">
    <citation type="journal article" date="2009" name="PLoS Genet.">
        <title>Organised genome dynamics in the Escherichia coli species results in highly diverse adaptive paths.</title>
        <authorList>
            <person name="Touchon M."/>
            <person name="Hoede C."/>
            <person name="Tenaillon O."/>
            <person name="Barbe V."/>
            <person name="Baeriswyl S."/>
            <person name="Bidet P."/>
            <person name="Bingen E."/>
            <person name="Bonacorsi S."/>
            <person name="Bouchier C."/>
            <person name="Bouvet O."/>
            <person name="Calteau A."/>
            <person name="Chiapello H."/>
            <person name="Clermont O."/>
            <person name="Cruveiller S."/>
            <person name="Danchin A."/>
            <person name="Diard M."/>
            <person name="Dossat C."/>
            <person name="Karoui M.E."/>
            <person name="Frapy E."/>
            <person name="Garry L."/>
            <person name="Ghigo J.M."/>
            <person name="Gilles A.M."/>
            <person name="Johnson J."/>
            <person name="Le Bouguenec C."/>
            <person name="Lescat M."/>
            <person name="Mangenot S."/>
            <person name="Martinez-Jehanne V."/>
            <person name="Matic I."/>
            <person name="Nassif X."/>
            <person name="Oztas S."/>
            <person name="Petit M.A."/>
            <person name="Pichon C."/>
            <person name="Rouy Z."/>
            <person name="Ruf C.S."/>
            <person name="Schneider D."/>
            <person name="Tourret J."/>
            <person name="Vacherie B."/>
            <person name="Vallenet D."/>
            <person name="Medigue C."/>
            <person name="Rocha E.P.C."/>
            <person name="Denamur E."/>
        </authorList>
    </citation>
    <scope>NUCLEOTIDE SEQUENCE [LARGE SCALE GENOMIC DNA]</scope>
    <source>
        <strain>ED1a</strain>
    </source>
</reference>
<keyword id="KW-0143">Chaperone</keyword>
<keyword id="KW-0963">Cytoplasm</keyword>
<keyword id="KW-0238">DNA-binding</keyword>
<feature type="chain" id="PRO_1000164288" description="Curved DNA-binding protein">
    <location>
        <begin position="1"/>
        <end position="306"/>
    </location>
</feature>
<feature type="domain" description="J" evidence="1">
    <location>
        <begin position="5"/>
        <end position="69"/>
    </location>
</feature>
<name>CBPA_ECO81</name>
<protein>
    <recommendedName>
        <fullName evidence="1">Curved DNA-binding protein</fullName>
    </recommendedName>
</protein>
<gene>
    <name evidence="1" type="primary">cbpA</name>
    <name type="ordered locus">ECED1_1077</name>
</gene>
<dbReference type="EMBL" id="CU928162">
    <property type="protein sequence ID" value="CAR07278.1"/>
    <property type="molecule type" value="Genomic_DNA"/>
</dbReference>
<dbReference type="RefSeq" id="WP_000420625.1">
    <property type="nucleotide sequence ID" value="NC_011745.1"/>
</dbReference>
<dbReference type="SMR" id="B7MPT2"/>
<dbReference type="KEGG" id="ecq:ECED1_1077"/>
<dbReference type="HOGENOM" id="CLU_017633_0_0_6"/>
<dbReference type="Proteomes" id="UP000000748">
    <property type="component" value="Chromosome"/>
</dbReference>
<dbReference type="GO" id="GO:0005737">
    <property type="term" value="C:cytoplasm"/>
    <property type="evidence" value="ECO:0007669"/>
    <property type="project" value="UniProtKB-UniRule"/>
</dbReference>
<dbReference type="GO" id="GO:0009295">
    <property type="term" value="C:nucleoid"/>
    <property type="evidence" value="ECO:0007669"/>
    <property type="project" value="UniProtKB-SubCell"/>
</dbReference>
<dbReference type="GO" id="GO:0003681">
    <property type="term" value="F:bent DNA binding"/>
    <property type="evidence" value="ECO:0007669"/>
    <property type="project" value="UniProtKB-UniRule"/>
</dbReference>
<dbReference type="GO" id="GO:0051082">
    <property type="term" value="F:unfolded protein binding"/>
    <property type="evidence" value="ECO:0007669"/>
    <property type="project" value="InterPro"/>
</dbReference>
<dbReference type="GO" id="GO:0051085">
    <property type="term" value="P:chaperone cofactor-dependent protein refolding"/>
    <property type="evidence" value="ECO:0007669"/>
    <property type="project" value="TreeGrafter"/>
</dbReference>
<dbReference type="GO" id="GO:0042026">
    <property type="term" value="P:protein refolding"/>
    <property type="evidence" value="ECO:0007669"/>
    <property type="project" value="TreeGrafter"/>
</dbReference>
<dbReference type="CDD" id="cd06257">
    <property type="entry name" value="DnaJ"/>
    <property type="match status" value="1"/>
</dbReference>
<dbReference type="CDD" id="cd10747">
    <property type="entry name" value="DnaJ_C"/>
    <property type="match status" value="1"/>
</dbReference>
<dbReference type="FunFam" id="1.10.287.110:FF:000013">
    <property type="entry name" value="Curved DNA-binding protein"/>
    <property type="match status" value="1"/>
</dbReference>
<dbReference type="FunFam" id="2.60.260.20:FF:000008">
    <property type="entry name" value="Curved DNA-binding protein"/>
    <property type="match status" value="1"/>
</dbReference>
<dbReference type="FunFam" id="2.60.260.20:FF:000013">
    <property type="entry name" value="DnaJ subfamily B member 11"/>
    <property type="match status" value="1"/>
</dbReference>
<dbReference type="Gene3D" id="1.10.287.110">
    <property type="entry name" value="DnaJ domain"/>
    <property type="match status" value="1"/>
</dbReference>
<dbReference type="Gene3D" id="1.20.5.460">
    <property type="entry name" value="Single helix bin"/>
    <property type="match status" value="1"/>
</dbReference>
<dbReference type="Gene3D" id="2.60.260.20">
    <property type="entry name" value="Urease metallochaperone UreE, N-terminal domain"/>
    <property type="match status" value="2"/>
</dbReference>
<dbReference type="HAMAP" id="MF_01154">
    <property type="entry name" value="CbpA"/>
    <property type="match status" value="1"/>
</dbReference>
<dbReference type="InterPro" id="IPR023859">
    <property type="entry name" value="DNA-bd_curved-DNA"/>
</dbReference>
<dbReference type="InterPro" id="IPR002939">
    <property type="entry name" value="DnaJ_C"/>
</dbReference>
<dbReference type="InterPro" id="IPR001623">
    <property type="entry name" value="DnaJ_domain"/>
</dbReference>
<dbReference type="InterPro" id="IPR018253">
    <property type="entry name" value="DnaJ_domain_CS"/>
</dbReference>
<dbReference type="InterPro" id="IPR008971">
    <property type="entry name" value="HSP40/DnaJ_pept-bd"/>
</dbReference>
<dbReference type="InterPro" id="IPR036869">
    <property type="entry name" value="J_dom_sf"/>
</dbReference>
<dbReference type="NCBIfam" id="NF007618">
    <property type="entry name" value="PRK10266.1"/>
    <property type="match status" value="1"/>
</dbReference>
<dbReference type="PANTHER" id="PTHR43096">
    <property type="entry name" value="DNAJ HOMOLOG 1, MITOCHONDRIAL-RELATED"/>
    <property type="match status" value="1"/>
</dbReference>
<dbReference type="PANTHER" id="PTHR43096:SF52">
    <property type="entry name" value="DNAJ HOMOLOG 1, MITOCHONDRIAL-RELATED"/>
    <property type="match status" value="1"/>
</dbReference>
<dbReference type="Pfam" id="PF00226">
    <property type="entry name" value="DnaJ"/>
    <property type="match status" value="1"/>
</dbReference>
<dbReference type="Pfam" id="PF01556">
    <property type="entry name" value="DnaJ_C"/>
    <property type="match status" value="1"/>
</dbReference>
<dbReference type="PRINTS" id="PR00625">
    <property type="entry name" value="JDOMAIN"/>
</dbReference>
<dbReference type="SMART" id="SM00271">
    <property type="entry name" value="DnaJ"/>
    <property type="match status" value="1"/>
</dbReference>
<dbReference type="SUPFAM" id="SSF46565">
    <property type="entry name" value="Chaperone J-domain"/>
    <property type="match status" value="1"/>
</dbReference>
<dbReference type="SUPFAM" id="SSF49493">
    <property type="entry name" value="HSP40/DnaJ peptide-binding domain"/>
    <property type="match status" value="2"/>
</dbReference>
<dbReference type="PROSITE" id="PS00636">
    <property type="entry name" value="DNAJ_1"/>
    <property type="match status" value="1"/>
</dbReference>
<dbReference type="PROSITE" id="PS50076">
    <property type="entry name" value="DNAJ_2"/>
    <property type="match status" value="1"/>
</dbReference>
<organism>
    <name type="scientific">Escherichia coli O81 (strain ED1a)</name>
    <dbReference type="NCBI Taxonomy" id="585397"/>
    <lineage>
        <taxon>Bacteria</taxon>
        <taxon>Pseudomonadati</taxon>
        <taxon>Pseudomonadota</taxon>
        <taxon>Gammaproteobacteria</taxon>
        <taxon>Enterobacterales</taxon>
        <taxon>Enterobacteriaceae</taxon>
        <taxon>Escherichia</taxon>
    </lineage>
</organism>
<sequence length="306" mass="34485">MELKDYYAIMGVKPTDDLKTIKTAYRRLARKYHPDVSKEPDAEARFKEVAEAWEVLSDEQRRAEYDQMWQHRNDPQFNRQFHHGDGQSFNAEDFDDIFSSIFGQHARQSRQRPATRGHDIEIEVAVFLEETLTEHKRTISYNLPVYNAFGMIEQEIPKTLNVKIPAGVGNGQRIRLKGQGTPGENGGPNGDLWLVIHIAPHPLFDIVGQDLEIVVPVSPWEAALGTKVTVPTLKESILLTIPPGSQAGQRLRVKGKGLVSKKQTGDLYAVLKIVMPPKPDENTAALWQQLADAQSSFDPRKDWGKA</sequence>
<proteinExistence type="inferred from homology"/>
<comment type="function">
    <text evidence="1">DNA-binding protein that preferentially recognizes a curved DNA sequence. It is probably a functional analog of DnaJ; displays overlapping activities with DnaJ, but functions under different conditions, probably acting as a molecular chaperone in an adaptive response to environmental stresses other than heat shock. Lacks autonomous chaperone activity; binds native substrates and targets them for recognition by DnaK. Its activity is inhibited by the binding of CbpM.</text>
</comment>
<comment type="subcellular location">
    <subcellularLocation>
        <location evidence="1">Cytoplasm</location>
        <location evidence="1">Nucleoid</location>
    </subcellularLocation>
</comment>
<accession>B7MPT2</accession>
<evidence type="ECO:0000255" key="1">
    <source>
        <dbReference type="HAMAP-Rule" id="MF_01154"/>
    </source>
</evidence>